<comment type="function">
    <text evidence="1">Catalyzes the decarboxylation of four acetate groups of uroporphyrinogen-III to yield coproporphyrinogen-III.</text>
</comment>
<comment type="catalytic activity">
    <reaction evidence="1">
        <text>uroporphyrinogen III + 4 H(+) = coproporphyrinogen III + 4 CO2</text>
        <dbReference type="Rhea" id="RHEA:19865"/>
        <dbReference type="ChEBI" id="CHEBI:15378"/>
        <dbReference type="ChEBI" id="CHEBI:16526"/>
        <dbReference type="ChEBI" id="CHEBI:57308"/>
        <dbReference type="ChEBI" id="CHEBI:57309"/>
        <dbReference type="EC" id="4.1.1.37"/>
    </reaction>
</comment>
<comment type="pathway">
    <text evidence="1">Porphyrin-containing compound metabolism; protoporphyrin-IX biosynthesis; coproporphyrinogen-III from 5-aminolevulinate: step 4/4.</text>
</comment>
<comment type="subunit">
    <text evidence="1">Homodimer.</text>
</comment>
<comment type="subcellular location">
    <subcellularLocation>
        <location evidence="1">Cytoplasm</location>
    </subcellularLocation>
</comment>
<comment type="similarity">
    <text evidence="1">Belongs to the uroporphyrinogen decarboxylase family.</text>
</comment>
<dbReference type="EC" id="4.1.1.37" evidence="1"/>
<dbReference type="EMBL" id="CP000555">
    <property type="protein sequence ID" value="ABM93096.1"/>
    <property type="molecule type" value="Genomic_DNA"/>
</dbReference>
<dbReference type="RefSeq" id="WP_011827735.1">
    <property type="nucleotide sequence ID" value="NC_008825.1"/>
</dbReference>
<dbReference type="SMR" id="A2SC07"/>
<dbReference type="STRING" id="420662.Mpe_A0134"/>
<dbReference type="KEGG" id="mpt:Mpe_A0134"/>
<dbReference type="eggNOG" id="COG0407">
    <property type="taxonomic scope" value="Bacteria"/>
</dbReference>
<dbReference type="HOGENOM" id="CLU_040933_0_0_4"/>
<dbReference type="UniPathway" id="UPA00251">
    <property type="reaction ID" value="UER00321"/>
</dbReference>
<dbReference type="Proteomes" id="UP000000366">
    <property type="component" value="Chromosome"/>
</dbReference>
<dbReference type="GO" id="GO:0005829">
    <property type="term" value="C:cytosol"/>
    <property type="evidence" value="ECO:0007669"/>
    <property type="project" value="TreeGrafter"/>
</dbReference>
<dbReference type="GO" id="GO:0004853">
    <property type="term" value="F:uroporphyrinogen decarboxylase activity"/>
    <property type="evidence" value="ECO:0007669"/>
    <property type="project" value="UniProtKB-UniRule"/>
</dbReference>
<dbReference type="GO" id="GO:0019353">
    <property type="term" value="P:protoporphyrinogen IX biosynthetic process from glutamate"/>
    <property type="evidence" value="ECO:0007669"/>
    <property type="project" value="TreeGrafter"/>
</dbReference>
<dbReference type="CDD" id="cd00717">
    <property type="entry name" value="URO-D"/>
    <property type="match status" value="1"/>
</dbReference>
<dbReference type="FunFam" id="3.20.20.210:FF:000001">
    <property type="entry name" value="Uroporphyrinogen decarboxylase"/>
    <property type="match status" value="1"/>
</dbReference>
<dbReference type="Gene3D" id="3.20.20.210">
    <property type="match status" value="1"/>
</dbReference>
<dbReference type="HAMAP" id="MF_00218">
    <property type="entry name" value="URO_D"/>
    <property type="match status" value="1"/>
</dbReference>
<dbReference type="InterPro" id="IPR038071">
    <property type="entry name" value="UROD/MetE-like_sf"/>
</dbReference>
<dbReference type="InterPro" id="IPR006361">
    <property type="entry name" value="Uroporphyrinogen_deCO2ase_HemE"/>
</dbReference>
<dbReference type="InterPro" id="IPR000257">
    <property type="entry name" value="Uroporphyrinogen_deCOase"/>
</dbReference>
<dbReference type="NCBIfam" id="TIGR01464">
    <property type="entry name" value="hemE"/>
    <property type="match status" value="1"/>
</dbReference>
<dbReference type="PANTHER" id="PTHR21091">
    <property type="entry name" value="METHYLTETRAHYDROFOLATE:HOMOCYSTEINE METHYLTRANSFERASE RELATED"/>
    <property type="match status" value="1"/>
</dbReference>
<dbReference type="PANTHER" id="PTHR21091:SF169">
    <property type="entry name" value="UROPORPHYRINOGEN DECARBOXYLASE"/>
    <property type="match status" value="1"/>
</dbReference>
<dbReference type="Pfam" id="PF01208">
    <property type="entry name" value="URO-D"/>
    <property type="match status" value="1"/>
</dbReference>
<dbReference type="SUPFAM" id="SSF51726">
    <property type="entry name" value="UROD/MetE-like"/>
    <property type="match status" value="1"/>
</dbReference>
<dbReference type="PROSITE" id="PS00906">
    <property type="entry name" value="UROD_1"/>
    <property type="match status" value="1"/>
</dbReference>
<dbReference type="PROSITE" id="PS00907">
    <property type="entry name" value="UROD_2"/>
    <property type="match status" value="1"/>
</dbReference>
<organism>
    <name type="scientific">Methylibium petroleiphilum (strain ATCC BAA-1232 / LMG 22953 / PM1)</name>
    <dbReference type="NCBI Taxonomy" id="420662"/>
    <lineage>
        <taxon>Bacteria</taxon>
        <taxon>Pseudomonadati</taxon>
        <taxon>Pseudomonadota</taxon>
        <taxon>Betaproteobacteria</taxon>
        <taxon>Burkholderiales</taxon>
        <taxon>Sphaerotilaceae</taxon>
        <taxon>Methylibium</taxon>
    </lineage>
</organism>
<sequence length="372" mass="40233">MTATPTASLPPLANDRFLRACLRLPTDVTPVWLMRQAGRYLSEYRDTRAKAGSFMGLATNPQYATEVTLQPLDRYPLDAAILFSDILTVPDAMGLGLSFAQGEGPRFAHPLRDEADVAKLQVPDMEKLRYVFDAVASIRRALAPAGAPGRVPLIGFSGSPWTLACYMVEGAGSDDYRLVKTLLYRRPDLMHRILEVNADAVAAYLNAQIEAGAQAVMIFDSWGGVLADGAFQRFSLAYTERVLRQLKKEQGGYRVPQIVFTKGGGLWLEAIADSGCDVVGLDWTMNLGAARARVGDRVALQGNLDPNVLFADPEQIRAEVARTLDSYGAPSAGSGHVFNLGHGISQHTPPDSVSVLVDAVHSYSRQQRGAAG</sequence>
<protein>
    <recommendedName>
        <fullName evidence="1">Uroporphyrinogen decarboxylase</fullName>
        <shortName evidence="1">UPD</shortName>
        <shortName evidence="1">URO-D</shortName>
        <ecNumber evidence="1">4.1.1.37</ecNumber>
    </recommendedName>
</protein>
<name>DCUP_METPP</name>
<reference key="1">
    <citation type="journal article" date="2007" name="J. Bacteriol.">
        <title>Whole-genome analysis of the methyl tert-butyl ether-degrading beta-proteobacterium Methylibium petroleiphilum PM1.</title>
        <authorList>
            <person name="Kane S.R."/>
            <person name="Chakicherla A.Y."/>
            <person name="Chain P.S.G."/>
            <person name="Schmidt R."/>
            <person name="Shin M.W."/>
            <person name="Legler T.C."/>
            <person name="Scow K.M."/>
            <person name="Larimer F.W."/>
            <person name="Lucas S.M."/>
            <person name="Richardson P.M."/>
            <person name="Hristova K.R."/>
        </authorList>
    </citation>
    <scope>NUCLEOTIDE SEQUENCE [LARGE SCALE GENOMIC DNA]</scope>
    <source>
        <strain>ATCC BAA-1232 / LMG 22953 / PM1</strain>
    </source>
</reference>
<feature type="chain" id="PRO_0000325662" description="Uroporphyrinogen decarboxylase">
    <location>
        <begin position="1"/>
        <end position="372"/>
    </location>
</feature>
<feature type="binding site" evidence="1">
    <location>
        <begin position="35"/>
        <end position="39"/>
    </location>
    <ligand>
        <name>substrate</name>
    </ligand>
</feature>
<feature type="binding site" evidence="1">
    <location>
        <position position="85"/>
    </location>
    <ligand>
        <name>substrate</name>
    </ligand>
</feature>
<feature type="binding site" evidence="1">
    <location>
        <position position="166"/>
    </location>
    <ligand>
        <name>substrate</name>
    </ligand>
</feature>
<feature type="binding site" evidence="1">
    <location>
        <position position="221"/>
    </location>
    <ligand>
        <name>substrate</name>
    </ligand>
</feature>
<feature type="binding site" evidence="1">
    <location>
        <position position="342"/>
    </location>
    <ligand>
        <name>substrate</name>
    </ligand>
</feature>
<feature type="site" description="Transition state stabilizer" evidence="1">
    <location>
        <position position="85"/>
    </location>
</feature>
<accession>A2SC07</accession>
<evidence type="ECO:0000255" key="1">
    <source>
        <dbReference type="HAMAP-Rule" id="MF_00218"/>
    </source>
</evidence>
<keyword id="KW-0963">Cytoplasm</keyword>
<keyword id="KW-0210">Decarboxylase</keyword>
<keyword id="KW-0456">Lyase</keyword>
<keyword id="KW-0627">Porphyrin biosynthesis</keyword>
<keyword id="KW-1185">Reference proteome</keyword>
<proteinExistence type="inferred from homology"/>
<gene>
    <name evidence="1" type="primary">hemE</name>
    <name type="ordered locus">Mpe_A0134</name>
</gene>